<reference key="1">
    <citation type="journal article" date="2011" name="J. Bacteriol.">
        <title>Comparative genomics of 28 Salmonella enterica isolates: evidence for CRISPR-mediated adaptive sublineage evolution.</title>
        <authorList>
            <person name="Fricke W.F."/>
            <person name="Mammel M.K."/>
            <person name="McDermott P.F."/>
            <person name="Tartera C."/>
            <person name="White D.G."/>
            <person name="Leclerc J.E."/>
            <person name="Ravel J."/>
            <person name="Cebula T.A."/>
        </authorList>
    </citation>
    <scope>NUCLEOTIDE SEQUENCE [LARGE SCALE GENOMIC DNA]</scope>
    <source>
        <strain>SL483</strain>
    </source>
</reference>
<proteinExistence type="inferred from homology"/>
<name>YCDX_SALA4</name>
<gene>
    <name evidence="1" type="primary">ycdX</name>
    <name type="ordered locus">SeAg_B2054</name>
</gene>
<accession>B5F973</accession>
<feature type="chain" id="PRO_1000147140" description="Probable phosphatase YcdX">
    <location>
        <begin position="1"/>
        <end position="245"/>
    </location>
</feature>
<feature type="binding site" evidence="1">
    <location>
        <position position="7"/>
    </location>
    <ligand>
        <name>Zn(2+)</name>
        <dbReference type="ChEBI" id="CHEBI:29105"/>
        <label>1</label>
    </ligand>
</feature>
<feature type="binding site" evidence="1">
    <location>
        <position position="9"/>
    </location>
    <ligand>
        <name>Zn(2+)</name>
        <dbReference type="ChEBI" id="CHEBI:29105"/>
        <label>1</label>
    </ligand>
</feature>
<feature type="binding site" evidence="1">
    <location>
        <position position="15"/>
    </location>
    <ligand>
        <name>Zn(2+)</name>
        <dbReference type="ChEBI" id="CHEBI:29105"/>
        <label>2</label>
    </ligand>
</feature>
<feature type="binding site" evidence="1">
    <location>
        <position position="40"/>
    </location>
    <ligand>
        <name>Zn(2+)</name>
        <dbReference type="ChEBI" id="CHEBI:29105"/>
        <label>2</label>
    </ligand>
</feature>
<feature type="binding site" evidence="1">
    <location>
        <position position="73"/>
    </location>
    <ligand>
        <name>Zn(2+)</name>
        <dbReference type="ChEBI" id="CHEBI:29105"/>
        <label>1</label>
    </ligand>
</feature>
<feature type="binding site" evidence="1">
    <location>
        <position position="73"/>
    </location>
    <ligand>
        <name>Zn(2+)</name>
        <dbReference type="ChEBI" id="CHEBI:29105"/>
        <label>3</label>
    </ligand>
</feature>
<feature type="binding site" evidence="1">
    <location>
        <position position="101"/>
    </location>
    <ligand>
        <name>Zn(2+)</name>
        <dbReference type="ChEBI" id="CHEBI:29105"/>
        <label>3</label>
    </ligand>
</feature>
<feature type="binding site" evidence="1">
    <location>
        <position position="131"/>
    </location>
    <ligand>
        <name>Zn(2+)</name>
        <dbReference type="ChEBI" id="CHEBI:29105"/>
        <label>3</label>
    </ligand>
</feature>
<feature type="binding site" evidence="1">
    <location>
        <position position="192"/>
    </location>
    <ligand>
        <name>Zn(2+)</name>
        <dbReference type="ChEBI" id="CHEBI:29105"/>
        <label>1</label>
    </ligand>
</feature>
<feature type="binding site" evidence="1">
    <location>
        <position position="194"/>
    </location>
    <ligand>
        <name>Zn(2+)</name>
        <dbReference type="ChEBI" id="CHEBI:29105"/>
        <label>2</label>
    </ligand>
</feature>
<evidence type="ECO:0000255" key="1">
    <source>
        <dbReference type="HAMAP-Rule" id="MF_01561"/>
    </source>
</evidence>
<comment type="cofactor">
    <cofactor evidence="1">
        <name>Zn(2+)</name>
        <dbReference type="ChEBI" id="CHEBI:29105"/>
    </cofactor>
    <text evidence="1">Binds 3 Zn(2+) ions per subunit.</text>
</comment>
<comment type="subunit">
    <text evidence="1">Homotrimer.</text>
</comment>
<comment type="similarity">
    <text evidence="1">Belongs to the PHP family.</text>
</comment>
<organism>
    <name type="scientific">Salmonella agona (strain SL483)</name>
    <dbReference type="NCBI Taxonomy" id="454166"/>
    <lineage>
        <taxon>Bacteria</taxon>
        <taxon>Pseudomonadati</taxon>
        <taxon>Pseudomonadota</taxon>
        <taxon>Gammaproteobacteria</taxon>
        <taxon>Enterobacterales</taxon>
        <taxon>Enterobacteriaceae</taxon>
        <taxon>Salmonella</taxon>
    </lineage>
</organism>
<keyword id="KW-0378">Hydrolase</keyword>
<keyword id="KW-0479">Metal-binding</keyword>
<keyword id="KW-0862">Zinc</keyword>
<dbReference type="EC" id="3.1.3.-" evidence="1"/>
<dbReference type="EMBL" id="CP001138">
    <property type="protein sequence ID" value="ACH51144.1"/>
    <property type="molecule type" value="Genomic_DNA"/>
</dbReference>
<dbReference type="RefSeq" id="WP_000283643.1">
    <property type="nucleotide sequence ID" value="NC_011149.1"/>
</dbReference>
<dbReference type="SMR" id="B5F973"/>
<dbReference type="KEGG" id="sea:SeAg_B2054"/>
<dbReference type="HOGENOM" id="CLU_061999_0_1_6"/>
<dbReference type="Proteomes" id="UP000008819">
    <property type="component" value="Chromosome"/>
</dbReference>
<dbReference type="GO" id="GO:0005829">
    <property type="term" value="C:cytosol"/>
    <property type="evidence" value="ECO:0007669"/>
    <property type="project" value="TreeGrafter"/>
</dbReference>
<dbReference type="GO" id="GO:0016791">
    <property type="term" value="F:phosphatase activity"/>
    <property type="evidence" value="ECO:0007669"/>
    <property type="project" value="UniProtKB-UniRule"/>
</dbReference>
<dbReference type="GO" id="GO:0008270">
    <property type="term" value="F:zinc ion binding"/>
    <property type="evidence" value="ECO:0007669"/>
    <property type="project" value="UniProtKB-UniRule"/>
</dbReference>
<dbReference type="GO" id="GO:0071978">
    <property type="term" value="P:bacterial-type flagellum-dependent swarming motility"/>
    <property type="evidence" value="ECO:0007669"/>
    <property type="project" value="TreeGrafter"/>
</dbReference>
<dbReference type="CDD" id="cd07437">
    <property type="entry name" value="PHP_HisPPase_Ycdx_like"/>
    <property type="match status" value="1"/>
</dbReference>
<dbReference type="FunFam" id="3.20.20.140:FF:000008">
    <property type="entry name" value="Probable phosphatase YcdX"/>
    <property type="match status" value="1"/>
</dbReference>
<dbReference type="Gene3D" id="3.20.20.140">
    <property type="entry name" value="Metal-dependent hydrolases"/>
    <property type="match status" value="1"/>
</dbReference>
<dbReference type="HAMAP" id="MF_01561">
    <property type="entry name" value="YcdX_phosphat"/>
    <property type="match status" value="1"/>
</dbReference>
<dbReference type="InterPro" id="IPR023710">
    <property type="entry name" value="Phosphatase_YcdX_put"/>
</dbReference>
<dbReference type="InterPro" id="IPR004013">
    <property type="entry name" value="PHP_dom"/>
</dbReference>
<dbReference type="InterPro" id="IPR050243">
    <property type="entry name" value="PHP_phosphatase"/>
</dbReference>
<dbReference type="InterPro" id="IPR003141">
    <property type="entry name" value="Pol/His_phosphatase_N"/>
</dbReference>
<dbReference type="InterPro" id="IPR016195">
    <property type="entry name" value="Pol/histidinol_Pase-like"/>
</dbReference>
<dbReference type="NCBIfam" id="NF006702">
    <property type="entry name" value="PRK09248.1"/>
    <property type="match status" value="1"/>
</dbReference>
<dbReference type="PANTHER" id="PTHR36928">
    <property type="entry name" value="PHOSPHATASE YCDX-RELATED"/>
    <property type="match status" value="1"/>
</dbReference>
<dbReference type="PANTHER" id="PTHR36928:SF1">
    <property type="entry name" value="PHOSPHATASE YCDX-RELATED"/>
    <property type="match status" value="1"/>
</dbReference>
<dbReference type="Pfam" id="PF02811">
    <property type="entry name" value="PHP"/>
    <property type="match status" value="1"/>
</dbReference>
<dbReference type="SMART" id="SM00481">
    <property type="entry name" value="POLIIIAc"/>
    <property type="match status" value="1"/>
</dbReference>
<dbReference type="SUPFAM" id="SSF89550">
    <property type="entry name" value="PHP domain-like"/>
    <property type="match status" value="1"/>
</dbReference>
<sequence length="245" mass="26906">MYPVDLHMHTVASTHAYSTLSDYIAEAKRKGIKLFAITDHGPDMEDAPHHWHFINMRIWPRLVDGVGILRGIEANIKNINGEIDCSGKMFDSLDLIIAGFHEPVFAPHDKETNTQAMIATIASGKVHIISHPGNPKYPVEVKAIAQAAAKHHVALEINNSSFLHSRKGSEDNCRAVAAAVRDAGGWVALGSDSHTAFTLGDFTECRKILDAVNFPEDRILNVSPQRLLAFLESRGMAPVPEFAEL</sequence>
<protein>
    <recommendedName>
        <fullName evidence="1">Probable phosphatase YcdX</fullName>
        <ecNumber evidence="1">3.1.3.-</ecNumber>
    </recommendedName>
</protein>